<protein>
    <recommendedName>
        <fullName evidence="11">Glycine N-methyltransferase</fullName>
        <ecNumber evidence="5 6 8 9">2.1.1.20</ecNumber>
    </recommendedName>
</protein>
<feature type="initiator methionine" description="Removed" evidence="1">
    <location>
        <position position="1"/>
    </location>
</feature>
<feature type="chain" id="PRO_0000087524" description="Glycine N-methyltransferase">
    <location>
        <begin position="2"/>
        <end position="295"/>
    </location>
</feature>
<feature type="binding site" evidence="1">
    <location>
        <position position="4"/>
    </location>
    <ligand>
        <name>(6S)-5-methyl-5,6,7,8-tetrahydrofolate</name>
        <dbReference type="ChEBI" id="CHEBI:18608"/>
        <label>1</label>
        <note>ligand shared between tetrameric partners</note>
    </ligand>
</feature>
<feature type="binding site" evidence="1">
    <location>
        <position position="6"/>
    </location>
    <ligand>
        <name>(6S)-5-methyl-5,6,7,8-tetrahydrofolate</name>
        <dbReference type="ChEBI" id="CHEBI:18608"/>
        <label>1</label>
        <note>ligand shared between tetrameric partners</note>
    </ligand>
</feature>
<feature type="binding site" evidence="1">
    <location>
        <position position="6"/>
    </location>
    <ligand>
        <name>(6S)-5-methyl-5,6,7,8-tetrahydrofolate</name>
        <dbReference type="ChEBI" id="CHEBI:18608"/>
        <label>2</label>
        <note>ligand shared between tetrameric partners</note>
    </ligand>
</feature>
<feature type="binding site" evidence="1">
    <location>
        <position position="22"/>
    </location>
    <ligand>
        <name>S-adenosyl-L-methionine</name>
        <dbReference type="ChEBI" id="CHEBI:59789"/>
    </ligand>
</feature>
<feature type="binding site" evidence="1">
    <location>
        <position position="31"/>
    </location>
    <ligand>
        <name>S-adenosyl-L-methionine</name>
        <dbReference type="ChEBI" id="CHEBI:59789"/>
    </ligand>
</feature>
<feature type="binding site" evidence="1">
    <location>
        <position position="34"/>
    </location>
    <ligand>
        <name>S-adenosyl-L-methionine</name>
        <dbReference type="ChEBI" id="CHEBI:59789"/>
    </ligand>
</feature>
<feature type="binding site" evidence="1">
    <location>
        <position position="41"/>
    </location>
    <ligand>
        <name>S-adenosyl-L-methionine</name>
        <dbReference type="ChEBI" id="CHEBI:59789"/>
    </ligand>
</feature>
<feature type="binding site" evidence="1">
    <location>
        <position position="65"/>
    </location>
    <ligand>
        <name>S-adenosyl-L-methionine</name>
        <dbReference type="ChEBI" id="CHEBI:59789"/>
    </ligand>
</feature>
<feature type="binding site" evidence="1">
    <location>
        <begin position="86"/>
        <end position="88"/>
    </location>
    <ligand>
        <name>S-adenosyl-L-methionine</name>
        <dbReference type="ChEBI" id="CHEBI:59789"/>
    </ligand>
</feature>
<feature type="binding site" evidence="1">
    <location>
        <begin position="117"/>
        <end position="118"/>
    </location>
    <ligand>
        <name>S-adenosyl-L-methionine</name>
        <dbReference type="ChEBI" id="CHEBI:59789"/>
    </ligand>
</feature>
<feature type="binding site" evidence="1">
    <location>
        <begin position="139"/>
        <end position="142"/>
    </location>
    <ligand>
        <name>S-adenosyl-L-methionine</name>
        <dbReference type="ChEBI" id="CHEBI:59789"/>
    </ligand>
</feature>
<feature type="binding site" evidence="1">
    <location>
        <position position="178"/>
    </location>
    <ligand>
        <name>S-adenosyl-L-methionine</name>
        <dbReference type="ChEBI" id="CHEBI:59789"/>
    </ligand>
</feature>
<feature type="binding site" evidence="1">
    <location>
        <position position="217"/>
    </location>
    <ligand>
        <name>(6S)-5-methyl-5,6,7,8-tetrahydrofolate</name>
        <dbReference type="ChEBI" id="CHEBI:18608"/>
        <label>2</label>
        <note>ligand shared between tetrameric partners</note>
    </ligand>
</feature>
<feature type="binding site" evidence="1">
    <location>
        <position position="223"/>
    </location>
    <ligand>
        <name>S-adenosyl-L-methionine</name>
        <dbReference type="ChEBI" id="CHEBI:59789"/>
    </ligand>
</feature>
<feature type="binding site" evidence="1">
    <location>
        <position position="242"/>
    </location>
    <ligand>
        <name>(6S)-5-methyl-5,6,7,8-tetrahydrofolate</name>
        <dbReference type="ChEBI" id="CHEBI:18608"/>
        <label>1</label>
        <note>ligand shared between tetrameric partners</note>
    </ligand>
</feature>
<feature type="binding site" evidence="1">
    <location>
        <position position="242"/>
    </location>
    <ligand>
        <name>(6S)-5-methyl-5,6,7,8-tetrahydrofolate</name>
        <dbReference type="ChEBI" id="CHEBI:18608"/>
        <label>2</label>
        <note>ligand shared between tetrameric partners</note>
    </ligand>
</feature>
<feature type="modified residue" description="N-acetylvaline" evidence="1">
    <location>
        <position position="2"/>
    </location>
</feature>
<feature type="modified residue" description="Phosphoserine" evidence="2">
    <location>
        <position position="10"/>
    </location>
</feature>
<feature type="modified residue" description="Phosphotyrosine" evidence="2">
    <location>
        <position position="34"/>
    </location>
</feature>
<feature type="modified residue" description="N6-succinyllysine" evidence="2">
    <location>
        <position position="46"/>
    </location>
</feature>
<feature type="modified residue" description="N6-succinyllysine" evidence="2">
    <location>
        <position position="193"/>
    </location>
</feature>
<feature type="modified residue" description="N6-succinyllysine" evidence="2">
    <location>
        <position position="198"/>
    </location>
</feature>
<feature type="modified residue" description="N6-succinyllysine" evidence="2">
    <location>
        <position position="203"/>
    </location>
</feature>
<feature type="sequence variant" id="VAR_012766" description="In GNMT deficiency; 10% wild-type glycine N-methyltransferase activity; dbSNP:rs121907888." evidence="4 5">
    <original>L</original>
    <variation>P</variation>
    <location>
        <position position="50"/>
    </location>
</feature>
<feature type="sequence variant" id="VAR_019840" description="In GNMT deficiency; 0.5% wild-type glycine N-methyltransferase activity; dbSNP:rs864321678." evidence="5 6">
    <original>N</original>
    <variation>S</variation>
    <location>
        <position position="141"/>
    </location>
</feature>
<feature type="sequence variant" id="VAR_012767" description="In GNMT deficiency; 75% wild-type glycine N-methyltransferase activity, decreases stability of the tetramer; dbSNP:rs121907889." evidence="4 5 8">
    <original>H</original>
    <variation>N</variation>
    <location>
        <position position="177"/>
    </location>
</feature>
<feature type="sequence conflict" description="In Ref. 6; CAA44164." evidence="11" ref="6">
    <location>
        <position position="119"/>
    </location>
</feature>
<feature type="sequence conflict" description="In Ref. 2; AAF78289." evidence="11" ref="2">
    <original>AE</original>
    <variation>PK</variation>
    <location>
        <begin position="129"/>
        <end position="130"/>
    </location>
</feature>
<feature type="sequence conflict" description="In Ref. 6; CAA44164." evidence="11" ref="6">
    <original>I</original>
    <variation>S</variation>
    <location>
        <position position="175"/>
    </location>
</feature>
<feature type="sequence conflict" description="In Ref. 6; CAA44164." evidence="11" ref="6">
    <original>LLQAA</original>
    <variation>SPSS</variation>
    <location>
        <begin position="256"/>
        <end position="260"/>
    </location>
</feature>
<feature type="turn" evidence="14">
    <location>
        <begin position="21"/>
        <end position="24"/>
    </location>
</feature>
<feature type="helix" evidence="14">
    <location>
        <begin position="28"/>
        <end position="34"/>
    </location>
</feature>
<feature type="helix" evidence="14">
    <location>
        <begin position="43"/>
        <end position="55"/>
    </location>
</feature>
<feature type="strand" evidence="14">
    <location>
        <begin position="60"/>
        <end position="64"/>
    </location>
</feature>
<feature type="helix" evidence="14">
    <location>
        <begin position="70"/>
        <end position="78"/>
    </location>
</feature>
<feature type="strand" evidence="14">
    <location>
        <begin position="81"/>
        <end position="87"/>
    </location>
</feature>
<feature type="helix" evidence="14">
    <location>
        <begin position="89"/>
        <end position="101"/>
    </location>
</feature>
<feature type="turn" evidence="14">
    <location>
        <begin position="102"/>
        <end position="104"/>
    </location>
</feature>
<feature type="helix" evidence="14">
    <location>
        <begin position="106"/>
        <end position="109"/>
    </location>
</feature>
<feature type="strand" evidence="14">
    <location>
        <begin position="112"/>
        <end position="115"/>
    </location>
</feature>
<feature type="helix" evidence="14">
    <location>
        <begin position="118"/>
        <end position="120"/>
    </location>
</feature>
<feature type="helix" evidence="14">
    <location>
        <begin position="121"/>
        <end position="124"/>
    </location>
</feature>
<feature type="strand" evidence="14">
    <location>
        <begin position="133"/>
        <end position="138"/>
    </location>
</feature>
<feature type="helix" evidence="14">
    <location>
        <begin position="143"/>
        <end position="145"/>
    </location>
</feature>
<feature type="strand" evidence="14">
    <location>
        <begin position="150"/>
        <end position="153"/>
    </location>
</feature>
<feature type="helix" evidence="14">
    <location>
        <begin position="154"/>
        <end position="165"/>
    </location>
</feature>
<feature type="strand" evidence="14">
    <location>
        <begin position="167"/>
        <end position="178"/>
    </location>
</feature>
<feature type="helix" evidence="14">
    <location>
        <begin position="180"/>
        <end position="186"/>
    </location>
</feature>
<feature type="strand" evidence="14">
    <location>
        <begin position="195"/>
        <end position="197"/>
    </location>
</feature>
<feature type="strand" evidence="14">
    <location>
        <begin position="204"/>
        <end position="212"/>
    </location>
</feature>
<feature type="strand" evidence="14">
    <location>
        <begin position="215"/>
        <end position="225"/>
    </location>
</feature>
<feature type="strand" evidence="14">
    <location>
        <begin position="239"/>
        <end position="245"/>
    </location>
</feature>
<feature type="helix" evidence="14">
    <location>
        <begin position="250"/>
        <end position="260"/>
    </location>
</feature>
<feature type="turn" evidence="14">
    <location>
        <begin position="261"/>
        <end position="263"/>
    </location>
</feature>
<feature type="strand" evidence="14">
    <location>
        <begin position="265"/>
        <end position="271"/>
    </location>
</feature>
<feature type="strand" evidence="14">
    <location>
        <begin position="285"/>
        <end position="293"/>
    </location>
</feature>
<sequence>MVDSVYRTRSLGVAAEGLPDQYADGEAARVWQLYIGDTRSRTAEYKAWLLGLLRQHGCQRVLDVACGTGVDSIMLVEEGFSVTSVDASDKMLKYALKERWNRRHEPAFDKWVIEEANWMTLDKDVPQSAEGGFDAVICLGNSFAHLPDCKGDQSEHRLALKNIASMVRAGGLLVIDHRNYDHILSTGCAPPGKNIYYKSDLTKDVTTSVLIVNNKAHMVTLDYTVQVPGAGQDGSPGLSKFRLSYYPHCLASFTELLQAAFGGKCQHSVLGDFKPYKPGQTYIPCYFIHVLKRTD</sequence>
<reference key="1">
    <citation type="journal article" date="1998" name="Int. J. Cancer">
        <title>Characterization of glycine-N-methyltransferase-gene expression in human hepatocellular carcinoma.</title>
        <authorList>
            <person name="Chen Y.-M.A."/>
            <person name="Shiu J.Y."/>
            <person name="Tzeng S.J."/>
            <person name="Shih L.S."/>
            <person name="Chen Y.J."/>
            <person name="Lui W.Y."/>
            <person name="Chen P.H."/>
        </authorList>
    </citation>
    <scope>NUCLEOTIDE SEQUENCE [MRNA]</scope>
</reference>
<reference key="2">
    <citation type="journal article" date="2000" name="Genomics">
        <title>Genomic structure, expression, and chromosomal localization of the human glycine N-methyltransferase gene.</title>
        <authorList>
            <person name="Chen Y.-M.A."/>
            <person name="Chen L.-Y."/>
            <person name="Wong F.H."/>
            <person name="Lee C.M."/>
            <person name="Chang T.J."/>
            <person name="Yang-Feng T.L."/>
        </authorList>
    </citation>
    <scope>NUCLEOTIDE SEQUENCE [GENOMIC DNA]</scope>
    <source>
        <tissue>Placenta</tissue>
    </source>
</reference>
<reference key="3">
    <citation type="journal article" date="2003" name="Nature">
        <title>The DNA sequence and analysis of human chromosome 6.</title>
        <authorList>
            <person name="Mungall A.J."/>
            <person name="Palmer S.A."/>
            <person name="Sims S.K."/>
            <person name="Edwards C.A."/>
            <person name="Ashurst J.L."/>
            <person name="Wilming L."/>
            <person name="Jones M.C."/>
            <person name="Horton R."/>
            <person name="Hunt S.E."/>
            <person name="Scott C.E."/>
            <person name="Gilbert J.G.R."/>
            <person name="Clamp M.E."/>
            <person name="Bethel G."/>
            <person name="Milne S."/>
            <person name="Ainscough R."/>
            <person name="Almeida J.P."/>
            <person name="Ambrose K.D."/>
            <person name="Andrews T.D."/>
            <person name="Ashwell R.I.S."/>
            <person name="Babbage A.K."/>
            <person name="Bagguley C.L."/>
            <person name="Bailey J."/>
            <person name="Banerjee R."/>
            <person name="Barker D.J."/>
            <person name="Barlow K.F."/>
            <person name="Bates K."/>
            <person name="Beare D.M."/>
            <person name="Beasley H."/>
            <person name="Beasley O."/>
            <person name="Bird C.P."/>
            <person name="Blakey S.E."/>
            <person name="Bray-Allen S."/>
            <person name="Brook J."/>
            <person name="Brown A.J."/>
            <person name="Brown J.Y."/>
            <person name="Burford D.C."/>
            <person name="Burrill W."/>
            <person name="Burton J."/>
            <person name="Carder C."/>
            <person name="Carter N.P."/>
            <person name="Chapman J.C."/>
            <person name="Clark S.Y."/>
            <person name="Clark G."/>
            <person name="Clee C.M."/>
            <person name="Clegg S."/>
            <person name="Cobley V."/>
            <person name="Collier R.E."/>
            <person name="Collins J.E."/>
            <person name="Colman L.K."/>
            <person name="Corby N.R."/>
            <person name="Coville G.J."/>
            <person name="Culley K.M."/>
            <person name="Dhami P."/>
            <person name="Davies J."/>
            <person name="Dunn M."/>
            <person name="Earthrowl M.E."/>
            <person name="Ellington A.E."/>
            <person name="Evans K.A."/>
            <person name="Faulkner L."/>
            <person name="Francis M.D."/>
            <person name="Frankish A."/>
            <person name="Frankland J."/>
            <person name="French L."/>
            <person name="Garner P."/>
            <person name="Garnett J."/>
            <person name="Ghori M.J."/>
            <person name="Gilby L.M."/>
            <person name="Gillson C.J."/>
            <person name="Glithero R.J."/>
            <person name="Grafham D.V."/>
            <person name="Grant M."/>
            <person name="Gribble S."/>
            <person name="Griffiths C."/>
            <person name="Griffiths M.N.D."/>
            <person name="Hall R."/>
            <person name="Halls K.S."/>
            <person name="Hammond S."/>
            <person name="Harley J.L."/>
            <person name="Hart E.A."/>
            <person name="Heath P.D."/>
            <person name="Heathcott R."/>
            <person name="Holmes S.J."/>
            <person name="Howden P.J."/>
            <person name="Howe K.L."/>
            <person name="Howell G.R."/>
            <person name="Huckle E."/>
            <person name="Humphray S.J."/>
            <person name="Humphries M.D."/>
            <person name="Hunt A.R."/>
            <person name="Johnson C.M."/>
            <person name="Joy A.A."/>
            <person name="Kay M."/>
            <person name="Keenan S.J."/>
            <person name="Kimberley A.M."/>
            <person name="King A."/>
            <person name="Laird G.K."/>
            <person name="Langford C."/>
            <person name="Lawlor S."/>
            <person name="Leongamornlert D.A."/>
            <person name="Leversha M."/>
            <person name="Lloyd C.R."/>
            <person name="Lloyd D.M."/>
            <person name="Loveland J.E."/>
            <person name="Lovell J."/>
            <person name="Martin S."/>
            <person name="Mashreghi-Mohammadi M."/>
            <person name="Maslen G.L."/>
            <person name="Matthews L."/>
            <person name="McCann O.T."/>
            <person name="McLaren S.J."/>
            <person name="McLay K."/>
            <person name="McMurray A."/>
            <person name="Moore M.J.F."/>
            <person name="Mullikin J.C."/>
            <person name="Niblett D."/>
            <person name="Nickerson T."/>
            <person name="Novik K.L."/>
            <person name="Oliver K."/>
            <person name="Overton-Larty E.K."/>
            <person name="Parker A."/>
            <person name="Patel R."/>
            <person name="Pearce A.V."/>
            <person name="Peck A.I."/>
            <person name="Phillimore B.J.C.T."/>
            <person name="Phillips S."/>
            <person name="Plumb R.W."/>
            <person name="Porter K.M."/>
            <person name="Ramsey Y."/>
            <person name="Ranby S.A."/>
            <person name="Rice C.M."/>
            <person name="Ross M.T."/>
            <person name="Searle S.M."/>
            <person name="Sehra H.K."/>
            <person name="Sheridan E."/>
            <person name="Skuce C.D."/>
            <person name="Smith S."/>
            <person name="Smith M."/>
            <person name="Spraggon L."/>
            <person name="Squares S.L."/>
            <person name="Steward C.A."/>
            <person name="Sycamore N."/>
            <person name="Tamlyn-Hall G."/>
            <person name="Tester J."/>
            <person name="Theaker A.J."/>
            <person name="Thomas D.W."/>
            <person name="Thorpe A."/>
            <person name="Tracey A."/>
            <person name="Tromans A."/>
            <person name="Tubby B."/>
            <person name="Wall M."/>
            <person name="Wallis J.M."/>
            <person name="West A.P."/>
            <person name="White S.S."/>
            <person name="Whitehead S.L."/>
            <person name="Whittaker H."/>
            <person name="Wild A."/>
            <person name="Willey D.J."/>
            <person name="Wilmer T.E."/>
            <person name="Wood J.M."/>
            <person name="Wray P.W."/>
            <person name="Wyatt J.C."/>
            <person name="Young L."/>
            <person name="Younger R.M."/>
            <person name="Bentley D.R."/>
            <person name="Coulson A."/>
            <person name="Durbin R.M."/>
            <person name="Hubbard T."/>
            <person name="Sulston J.E."/>
            <person name="Dunham I."/>
            <person name="Rogers J."/>
            <person name="Beck S."/>
        </authorList>
    </citation>
    <scope>NUCLEOTIDE SEQUENCE [LARGE SCALE GENOMIC DNA]</scope>
</reference>
<reference key="4">
    <citation type="submission" date="2005-07" db="EMBL/GenBank/DDBJ databases">
        <authorList>
            <person name="Mural R.J."/>
            <person name="Istrail S."/>
            <person name="Sutton G.G."/>
            <person name="Florea L."/>
            <person name="Halpern A.L."/>
            <person name="Mobarry C.M."/>
            <person name="Lippert R."/>
            <person name="Walenz B."/>
            <person name="Shatkay H."/>
            <person name="Dew I."/>
            <person name="Miller J.R."/>
            <person name="Flanigan M.J."/>
            <person name="Edwards N.J."/>
            <person name="Bolanos R."/>
            <person name="Fasulo D."/>
            <person name="Halldorsson B.V."/>
            <person name="Hannenhalli S."/>
            <person name="Turner R."/>
            <person name="Yooseph S."/>
            <person name="Lu F."/>
            <person name="Nusskern D.R."/>
            <person name="Shue B.C."/>
            <person name="Zheng X.H."/>
            <person name="Zhong F."/>
            <person name="Delcher A.L."/>
            <person name="Huson D.H."/>
            <person name="Kravitz S.A."/>
            <person name="Mouchard L."/>
            <person name="Reinert K."/>
            <person name="Remington K.A."/>
            <person name="Clark A.G."/>
            <person name="Waterman M.S."/>
            <person name="Eichler E.E."/>
            <person name="Adams M.D."/>
            <person name="Hunkapiller M.W."/>
            <person name="Myers E.W."/>
            <person name="Venter J.C."/>
        </authorList>
    </citation>
    <scope>NUCLEOTIDE SEQUENCE [LARGE SCALE GENOMIC DNA]</scope>
</reference>
<reference key="5">
    <citation type="journal article" date="2004" name="Genome Res.">
        <title>The status, quality, and expansion of the NIH full-length cDNA project: the Mammalian Gene Collection (MGC).</title>
        <authorList>
            <consortium name="The MGC Project Team"/>
        </authorList>
    </citation>
    <scope>NUCLEOTIDE SEQUENCE [LARGE SCALE MRNA]</scope>
    <source>
        <tissue>Pancreas</tissue>
    </source>
</reference>
<reference key="6">
    <citation type="journal article" date="1993" name="Comp. Biochem. Physiol.">
        <title>Mammalian glycine N-methyltransferases. Comparative kinetic and structural properties of the enzymes from human, rat, rabbit and pig livers.</title>
        <authorList>
            <person name="Ogawa H."/>
            <person name="Gomi T."/>
            <person name="Fujioka M."/>
        </authorList>
    </citation>
    <scope>NUCLEOTIDE SEQUENCE [MRNA] OF 31-295</scope>
    <scope>CATALYTIC ACTIVITY</scope>
    <scope>FUNCTION</scope>
</reference>
<reference key="7">
    <citation type="journal article" date="2014" name="J. Proteomics">
        <title>An enzyme assisted RP-RPLC approach for in-depth analysis of human liver phosphoproteome.</title>
        <authorList>
            <person name="Bian Y."/>
            <person name="Song C."/>
            <person name="Cheng K."/>
            <person name="Dong M."/>
            <person name="Wang F."/>
            <person name="Huang J."/>
            <person name="Sun D."/>
            <person name="Wang L."/>
            <person name="Ye M."/>
            <person name="Zou H."/>
        </authorList>
    </citation>
    <scope>IDENTIFICATION BY MASS SPECTROMETRY [LARGE SCALE ANALYSIS]</scope>
    <source>
        <tissue>Liver</tissue>
    </source>
</reference>
<reference key="8">
    <citation type="journal article" date="2004" name="Proteins">
        <title>Glycine N-methyltransferases: a comparison of the crystal structures and kinetic properties of recombinant human, mouse and rat enzymes.</title>
        <authorList>
            <person name="Pakhomova S."/>
            <person name="Luka Z."/>
            <person name="Grohmann S."/>
            <person name="Wagner C."/>
            <person name="Newcomer M.E."/>
        </authorList>
    </citation>
    <scope>X-RAY CRYSTALLOGRAPHY (2.55 ANGSTROMS) OF 2-294</scope>
    <scope>SUBUNIT</scope>
</reference>
<reference key="9">
    <citation type="journal article" date="2007" name="Protein Sci.">
        <title>Destabilization of human glycine N-methyltransferase by H176N mutation.</title>
        <authorList>
            <person name="Luka Z."/>
            <person name="Pakhomova S."/>
            <person name="Luka Y."/>
            <person name="Newcomer M.E."/>
            <person name="Wagner C."/>
        </authorList>
    </citation>
    <scope>X-RAY CRYSTALLOGRAPHY (2.7 ANGSTROMS) OF 1-294</scope>
    <scope>SUBUNIT</scope>
    <scope>FUNCTION</scope>
    <scope>CATALYTIC ACTIVITY</scope>
    <scope>CHARACTERIZATION OF VARIANT GNMT DEFICIENCY ASN-177</scope>
</reference>
<reference key="10">
    <citation type="journal article" date="2002" name="Hum. Genet.">
        <title>Mutations in human glycine N-methyltransferase give insights into its role in methionine metabolism.</title>
        <authorList>
            <person name="Luka Z."/>
            <person name="Cerone R."/>
            <person name="Phillips J.A. III"/>
            <person name="Mudd S.H."/>
            <person name="Wagner C."/>
        </authorList>
    </citation>
    <scope>VARIANTS GNMT DEFICIENCY PRO-50 AND ASN-177</scope>
</reference>
<reference key="11">
    <citation type="journal article" date="2003" name="Biochem. Biophys. Res. Commun.">
        <title>Effect of naturally occurring mutations in human glycine N-methyltransferase on activity and conformation.</title>
        <authorList>
            <person name="Luka Z."/>
            <person name="Wagner C."/>
        </authorList>
    </citation>
    <scope>CHARACTERIZATION OF VARIANTS GNMT DEFICIENCY PRO-50; SER-141 AND ASN-177</scope>
    <scope>FUNCTION</scope>
    <scope>CATALYTIC ACTIVITY</scope>
    <scope>BIOPHYSICOCHEMICAL PROPERTIES</scope>
</reference>
<reference key="12">
    <citation type="journal article" date="2003" name="J. Inherit. Metab. Dis.">
        <title>Glycine N-methyltransferase deficiency: a new patient with a novel mutation.</title>
        <authorList>
            <person name="Augoustides-Savvopoulou P."/>
            <person name="Luka Z."/>
            <person name="Karyda S."/>
            <person name="Stabler S.P."/>
            <person name="Allen R.H."/>
            <person name="Patsiaoura K."/>
            <person name="Wagner C."/>
            <person name="Mudd S.H."/>
        </authorList>
    </citation>
    <scope>VARIANT GNMT DEFICIENCY SER-141</scope>
    <scope>CHARACTERIZATION OF VARIANT GNMT DEFICIENCY SER-141</scope>
    <scope>FUNCTION</scope>
    <scope>CATALYTIC ACTIVITY</scope>
</reference>
<organism>
    <name type="scientific">Homo sapiens</name>
    <name type="common">Human</name>
    <dbReference type="NCBI Taxonomy" id="9606"/>
    <lineage>
        <taxon>Eukaryota</taxon>
        <taxon>Metazoa</taxon>
        <taxon>Chordata</taxon>
        <taxon>Craniata</taxon>
        <taxon>Vertebrata</taxon>
        <taxon>Euteleostomi</taxon>
        <taxon>Mammalia</taxon>
        <taxon>Eutheria</taxon>
        <taxon>Euarchontoglires</taxon>
        <taxon>Primates</taxon>
        <taxon>Haplorrhini</taxon>
        <taxon>Catarrhini</taxon>
        <taxon>Hominidae</taxon>
        <taxon>Homo</taxon>
    </lineage>
</organism>
<dbReference type="EC" id="2.1.1.20" evidence="5 6 8 9"/>
<dbReference type="EMBL" id="AF101477">
    <property type="protein sequence ID" value="AAF78290.1"/>
    <property type="molecule type" value="mRNA"/>
</dbReference>
<dbReference type="EMBL" id="AF101475">
    <property type="protein sequence ID" value="AAF78289.1"/>
    <property type="molecule type" value="Genomic_DNA"/>
</dbReference>
<dbReference type="EMBL" id="AL158815">
    <property type="status" value="NOT_ANNOTATED_CDS"/>
    <property type="molecule type" value="Genomic_DNA"/>
</dbReference>
<dbReference type="EMBL" id="CH471081">
    <property type="protein sequence ID" value="EAX04124.1"/>
    <property type="molecule type" value="Genomic_DNA"/>
</dbReference>
<dbReference type="EMBL" id="BC032627">
    <property type="protein sequence ID" value="AAH32627.1"/>
    <property type="molecule type" value="mRNA"/>
</dbReference>
<dbReference type="EMBL" id="X62250">
    <property type="protein sequence ID" value="CAA44164.1"/>
    <property type="molecule type" value="mRNA"/>
</dbReference>
<dbReference type="CCDS" id="CCDS4876.1"/>
<dbReference type="PIR" id="S42627">
    <property type="entry name" value="S42627"/>
</dbReference>
<dbReference type="RefSeq" id="NP_001305794.1">
    <property type="nucleotide sequence ID" value="NM_001318865.1"/>
</dbReference>
<dbReference type="RefSeq" id="NP_061833.1">
    <property type="nucleotide sequence ID" value="NM_018960.6"/>
</dbReference>
<dbReference type="PDB" id="1R74">
    <property type="method" value="X-ray"/>
    <property type="resolution" value="2.55 A"/>
    <property type="chains" value="A/B=2-295"/>
</dbReference>
<dbReference type="PDB" id="2AZT">
    <property type="method" value="X-ray"/>
    <property type="resolution" value="2.70 A"/>
    <property type="chains" value="A/B=1-295"/>
</dbReference>
<dbReference type="PDBsum" id="1R74"/>
<dbReference type="PDBsum" id="2AZT"/>
<dbReference type="SMR" id="Q14749"/>
<dbReference type="BioGRID" id="118081">
    <property type="interactions" value="41"/>
</dbReference>
<dbReference type="FunCoup" id="Q14749">
    <property type="interactions" value="663"/>
</dbReference>
<dbReference type="IntAct" id="Q14749">
    <property type="interactions" value="30"/>
</dbReference>
<dbReference type="MINT" id="Q14749"/>
<dbReference type="STRING" id="9606.ENSP00000361894"/>
<dbReference type="BindingDB" id="Q14749"/>
<dbReference type="ChEMBL" id="CHEMBL4523295"/>
<dbReference type="DrugBank" id="DB00118">
    <property type="generic name" value="Ademetionine"/>
</dbReference>
<dbReference type="DrugBank" id="DB00145">
    <property type="generic name" value="Glycine"/>
</dbReference>
<dbReference type="DrugBank" id="DB01752">
    <property type="generic name" value="S-adenosyl-L-homocysteine"/>
</dbReference>
<dbReference type="iPTMnet" id="Q14749"/>
<dbReference type="PhosphoSitePlus" id="Q14749"/>
<dbReference type="BioMuta" id="GNMT"/>
<dbReference type="DMDM" id="12644416"/>
<dbReference type="MassIVE" id="Q14749"/>
<dbReference type="PaxDb" id="9606-ENSP00000361894"/>
<dbReference type="PeptideAtlas" id="Q14749"/>
<dbReference type="ProteomicsDB" id="60155"/>
<dbReference type="Antibodypedia" id="16133">
    <property type="antibodies" value="349 antibodies from 30 providers"/>
</dbReference>
<dbReference type="DNASU" id="27232"/>
<dbReference type="Ensembl" id="ENST00000372808.4">
    <property type="protein sequence ID" value="ENSP00000361894.3"/>
    <property type="gene ID" value="ENSG00000124713.6"/>
</dbReference>
<dbReference type="GeneID" id="27232"/>
<dbReference type="KEGG" id="hsa:27232"/>
<dbReference type="MANE-Select" id="ENST00000372808.4">
    <property type="protein sequence ID" value="ENSP00000361894.3"/>
    <property type="RefSeq nucleotide sequence ID" value="NM_018960.6"/>
    <property type="RefSeq protein sequence ID" value="NP_061833.1"/>
</dbReference>
<dbReference type="AGR" id="HGNC:4415"/>
<dbReference type="CTD" id="27232"/>
<dbReference type="DisGeNET" id="27232"/>
<dbReference type="GeneCards" id="GNMT"/>
<dbReference type="HGNC" id="HGNC:4415">
    <property type="gene designation" value="GNMT"/>
</dbReference>
<dbReference type="HPA" id="ENSG00000124713">
    <property type="expression patterns" value="Group enriched (liver, pancreas)"/>
</dbReference>
<dbReference type="MalaCards" id="GNMT"/>
<dbReference type="MIM" id="606628">
    <property type="type" value="gene"/>
</dbReference>
<dbReference type="MIM" id="606664">
    <property type="type" value="phenotype"/>
</dbReference>
<dbReference type="neXtProt" id="NX_Q14749"/>
<dbReference type="OpenTargets" id="ENSG00000124713"/>
<dbReference type="Orphanet" id="289891">
    <property type="disease" value="Hypermethioninemia due to glycine N-methyltransferase deficiency"/>
</dbReference>
<dbReference type="PharmGKB" id="PA28794"/>
<dbReference type="VEuPathDB" id="HostDB:ENSG00000124713"/>
<dbReference type="eggNOG" id="ENOG502QRN6">
    <property type="taxonomic scope" value="Eukaryota"/>
</dbReference>
<dbReference type="GeneTree" id="ENSGT00390000006845"/>
<dbReference type="HOGENOM" id="CLU_069129_0_0_1"/>
<dbReference type="InParanoid" id="Q14749"/>
<dbReference type="OMA" id="LETGCAP"/>
<dbReference type="OrthoDB" id="3647at2759"/>
<dbReference type="PAN-GO" id="Q14749">
    <property type="GO annotations" value="11 GO annotations based on evolutionary models"/>
</dbReference>
<dbReference type="PhylomeDB" id="Q14749"/>
<dbReference type="TreeFam" id="TF324814"/>
<dbReference type="BRENDA" id="2.1.1.20">
    <property type="organism ID" value="2681"/>
</dbReference>
<dbReference type="PathwayCommons" id="Q14749"/>
<dbReference type="Reactome" id="R-HSA-2408508">
    <property type="pathway name" value="Metabolism of ingested SeMet, Sec, MeSec into H2Se"/>
</dbReference>
<dbReference type="Reactome" id="R-HSA-389661">
    <property type="pathway name" value="Glyoxylate metabolism and glycine degradation"/>
</dbReference>
<dbReference type="Reactome" id="R-HSA-9925561">
    <property type="pathway name" value="Developmental Lineage of Pancreatic Acinar Cells"/>
</dbReference>
<dbReference type="SABIO-RK" id="Q14749"/>
<dbReference type="SignaLink" id="Q14749"/>
<dbReference type="SIGNOR" id="Q14749"/>
<dbReference type="BioGRID-ORCS" id="27232">
    <property type="hits" value="13 hits in 1156 CRISPR screens"/>
</dbReference>
<dbReference type="EvolutionaryTrace" id="Q14749"/>
<dbReference type="GeneWiki" id="GNMT"/>
<dbReference type="GenomeRNAi" id="27232"/>
<dbReference type="Pharos" id="Q14749">
    <property type="development level" value="Tchem"/>
</dbReference>
<dbReference type="PRO" id="PR:Q14749"/>
<dbReference type="Proteomes" id="UP000005640">
    <property type="component" value="Chromosome 6"/>
</dbReference>
<dbReference type="RNAct" id="Q14749">
    <property type="molecule type" value="protein"/>
</dbReference>
<dbReference type="Bgee" id="ENSG00000124713">
    <property type="expression patterns" value="Expressed in body of pancreas and 94 other cell types or tissues"/>
</dbReference>
<dbReference type="ExpressionAtlas" id="Q14749">
    <property type="expression patterns" value="baseline and differential"/>
</dbReference>
<dbReference type="GO" id="GO:0005829">
    <property type="term" value="C:cytosol"/>
    <property type="evidence" value="ECO:0000314"/>
    <property type="project" value="HPA"/>
</dbReference>
<dbReference type="GO" id="GO:0005542">
    <property type="term" value="F:folic acid binding"/>
    <property type="evidence" value="ECO:0007669"/>
    <property type="project" value="UniProtKB-KW"/>
</dbReference>
<dbReference type="GO" id="GO:0016594">
    <property type="term" value="F:glycine binding"/>
    <property type="evidence" value="ECO:0000314"/>
    <property type="project" value="UniProtKB"/>
</dbReference>
<dbReference type="GO" id="GO:0017174">
    <property type="term" value="F:glycine N-methyltransferase activity"/>
    <property type="evidence" value="ECO:0000314"/>
    <property type="project" value="UniProtKB"/>
</dbReference>
<dbReference type="GO" id="GO:0042802">
    <property type="term" value="F:identical protein binding"/>
    <property type="evidence" value="ECO:0000353"/>
    <property type="project" value="IntAct"/>
</dbReference>
<dbReference type="GO" id="GO:1904047">
    <property type="term" value="F:S-adenosyl-L-methionine binding"/>
    <property type="evidence" value="ECO:0000318"/>
    <property type="project" value="GO_Central"/>
</dbReference>
<dbReference type="GO" id="GO:0005977">
    <property type="term" value="P:glycogen metabolic process"/>
    <property type="evidence" value="ECO:0007669"/>
    <property type="project" value="Ensembl"/>
</dbReference>
<dbReference type="GO" id="GO:0006555">
    <property type="term" value="P:methionine metabolic process"/>
    <property type="evidence" value="ECO:0007669"/>
    <property type="project" value="Ensembl"/>
</dbReference>
<dbReference type="GO" id="GO:0032259">
    <property type="term" value="P:methylation"/>
    <property type="evidence" value="ECO:0007669"/>
    <property type="project" value="UniProtKB-KW"/>
</dbReference>
<dbReference type="GO" id="GO:0006730">
    <property type="term" value="P:one-carbon metabolic process"/>
    <property type="evidence" value="ECO:0000318"/>
    <property type="project" value="GO_Central"/>
</dbReference>
<dbReference type="GO" id="GO:0051289">
    <property type="term" value="P:protein homotetramerization"/>
    <property type="evidence" value="ECO:0000353"/>
    <property type="project" value="UniProtKB"/>
</dbReference>
<dbReference type="GO" id="GO:0006111">
    <property type="term" value="P:regulation of gluconeogenesis"/>
    <property type="evidence" value="ECO:0000318"/>
    <property type="project" value="GO_Central"/>
</dbReference>
<dbReference type="GO" id="GO:0046498">
    <property type="term" value="P:S-adenosylhomocysteine metabolic process"/>
    <property type="evidence" value="ECO:0000318"/>
    <property type="project" value="GO_Central"/>
</dbReference>
<dbReference type="GO" id="GO:0046500">
    <property type="term" value="P:S-adenosylmethionine metabolic process"/>
    <property type="evidence" value="ECO:0000314"/>
    <property type="project" value="UniProtKB"/>
</dbReference>
<dbReference type="GO" id="GO:1901052">
    <property type="term" value="P:sarcosine metabolic process"/>
    <property type="evidence" value="ECO:0000318"/>
    <property type="project" value="GO_Central"/>
</dbReference>
<dbReference type="CDD" id="cd02440">
    <property type="entry name" value="AdoMet_MTases"/>
    <property type="match status" value="1"/>
</dbReference>
<dbReference type="FunFam" id="3.30.46.10:FF:000001">
    <property type="entry name" value="Glycine N-methyltransferase"/>
    <property type="match status" value="1"/>
</dbReference>
<dbReference type="FunFam" id="3.40.50.150:FF:000113">
    <property type="entry name" value="Glycine N-methyltransferase"/>
    <property type="match status" value="1"/>
</dbReference>
<dbReference type="Gene3D" id="3.30.46.10">
    <property type="entry name" value="Glycine N-methyltransferase, chain A, domain 1"/>
    <property type="match status" value="1"/>
</dbReference>
<dbReference type="Gene3D" id="3.40.50.150">
    <property type="entry name" value="Vaccinia Virus protein VP39"/>
    <property type="match status" value="1"/>
</dbReference>
<dbReference type="InterPro" id="IPR014369">
    <property type="entry name" value="Gly/Sar_N_MeTrfase"/>
</dbReference>
<dbReference type="InterPro" id="IPR041698">
    <property type="entry name" value="Methyltransf_25"/>
</dbReference>
<dbReference type="InterPro" id="IPR029063">
    <property type="entry name" value="SAM-dependent_MTases_sf"/>
</dbReference>
<dbReference type="PANTHER" id="PTHR16458">
    <property type="entry name" value="GLYCINE N-METHYLTRANSFERASE"/>
    <property type="match status" value="1"/>
</dbReference>
<dbReference type="PANTHER" id="PTHR16458:SF2">
    <property type="entry name" value="GLYCINE N-METHYLTRANSFERASE"/>
    <property type="match status" value="1"/>
</dbReference>
<dbReference type="Pfam" id="PF13649">
    <property type="entry name" value="Methyltransf_25"/>
    <property type="match status" value="1"/>
</dbReference>
<dbReference type="PIRSF" id="PIRSF000385">
    <property type="entry name" value="Gly_N-mtase"/>
    <property type="match status" value="1"/>
</dbReference>
<dbReference type="SUPFAM" id="SSF53335">
    <property type="entry name" value="S-adenosyl-L-methionine-dependent methyltransferases"/>
    <property type="match status" value="1"/>
</dbReference>
<dbReference type="PROSITE" id="PS51600">
    <property type="entry name" value="SAM_GNMT"/>
    <property type="match status" value="1"/>
</dbReference>
<proteinExistence type="evidence at protein level"/>
<comment type="function">
    <text evidence="5 6 8 9">Catalyzes the methylation of glycine by using S-adenosylmethionine (AdoMet) to form N-methylglycine (sarcosine) with the concomitant production of S-adenosylhomocysteine (AdoHcy), a reaction regulated by the binding of 5-methyltetrahydrofolate. Plays an important role in the regulation of methyl group metabolism by regulating the ratio between S-adenosyl-L-methionine and S-adenosyl-L-homocysteine.</text>
</comment>
<comment type="catalytic activity">
    <reaction evidence="5 6 8 9">
        <text>glycine + S-adenosyl-L-methionine = sarcosine + S-adenosyl-L-homocysteine + H(+)</text>
        <dbReference type="Rhea" id="RHEA:19937"/>
        <dbReference type="ChEBI" id="CHEBI:15378"/>
        <dbReference type="ChEBI" id="CHEBI:57305"/>
        <dbReference type="ChEBI" id="CHEBI:57433"/>
        <dbReference type="ChEBI" id="CHEBI:57856"/>
        <dbReference type="ChEBI" id="CHEBI:59789"/>
        <dbReference type="EC" id="2.1.1.20"/>
    </reaction>
    <physiologicalReaction direction="left-to-right" evidence="12">
        <dbReference type="Rhea" id="RHEA:19938"/>
    </physiologicalReaction>
</comment>
<comment type="activity regulation">
    <text evidence="1">Inhibited by 5-methyltetrahydrofolate monoglutamate and by 5-methyltetrahydrofolate pentaglutamate, inhibition is much more effective by the pentaglutamate form than by the monoglutamate form. Two molecules of 5-methyltetrahydrofolate are bound per tetramer. The binding sites are localized between subunits. Inhibitor binding may preclude movements of the polypeptide chain that are necessary for enzyme activity.</text>
</comment>
<comment type="biophysicochemical properties">
    <kinetics>
        <KM evidence="5">281 uM for S-adenosyl-L-methionine</KM>
        <KM evidence="5">12.2 uM for glycine</KM>
    </kinetics>
</comment>
<comment type="subunit">
    <text evidence="7 8">Homotetramer.</text>
</comment>
<comment type="interaction">
    <interactant intactId="EBI-744239">
        <id>Q14749</id>
    </interactant>
    <interactant intactId="EBI-743313">
        <id>P49407</id>
        <label>ARRB1</label>
    </interactant>
    <organismsDiffer>false</organismsDiffer>
    <experiments>12</experiments>
</comment>
<comment type="interaction">
    <interactant intactId="EBI-744239">
        <id>Q14749</id>
    </interactant>
    <interactant intactId="EBI-2684371">
        <id>P24311</id>
        <label>COX7B</label>
    </interactant>
    <organismsDiffer>false</organismsDiffer>
    <experiments>3</experiments>
</comment>
<comment type="interaction">
    <interactant intactId="EBI-744239">
        <id>Q14749</id>
    </interactant>
    <interactant intactId="EBI-19888994">
        <id>O60931-2</id>
        <label>CTNS</label>
    </interactant>
    <organismsDiffer>false</organismsDiffer>
    <experiments>3</experiments>
</comment>
<comment type="interaction">
    <interactant intactId="EBI-744239">
        <id>Q14749</id>
    </interactant>
    <interactant intactId="EBI-11974185">
        <id>Q494R4-2</id>
        <label>DRC12</label>
    </interactant>
    <organismsDiffer>false</organismsDiffer>
    <experiments>3</experiments>
</comment>
<comment type="interaction">
    <interactant intactId="EBI-744239">
        <id>Q14749</id>
    </interactant>
    <interactant intactId="EBI-2515248">
        <id>Q14331</id>
        <label>FRG1</label>
    </interactant>
    <organismsDiffer>false</organismsDiffer>
    <experiments>3</experiments>
</comment>
<comment type="interaction">
    <interactant intactId="EBI-744239">
        <id>Q14749</id>
    </interactant>
    <interactant intactId="EBI-12820585">
        <id>Q9UN88</id>
        <label>GABRQ</label>
    </interactant>
    <organismsDiffer>false</organismsDiffer>
    <experiments>3</experiments>
</comment>
<comment type="interaction">
    <interactant intactId="EBI-744239">
        <id>Q14749</id>
    </interactant>
    <interactant intactId="EBI-12329121">
        <id>Q13066</id>
        <label>GAGE2C</label>
    </interactant>
    <organismsDiffer>false</organismsDiffer>
    <experiments>3</experiments>
</comment>
<comment type="interaction">
    <interactant intactId="EBI-744239">
        <id>Q14749</id>
    </interactant>
    <interactant intactId="EBI-16440982">
        <id>A0A0S2Z5F2</id>
        <label>GNMT</label>
    </interactant>
    <organismsDiffer>false</organismsDiffer>
    <experiments>3</experiments>
</comment>
<comment type="interaction">
    <interactant intactId="EBI-744239">
        <id>Q14749</id>
    </interactant>
    <interactant intactId="EBI-744239">
        <id>Q14749</id>
        <label>GNMT</label>
    </interactant>
    <organismsDiffer>false</organismsDiffer>
    <experiments>6</experiments>
</comment>
<comment type="interaction">
    <interactant intactId="EBI-744239">
        <id>Q14749</id>
    </interactant>
    <interactant intactId="EBI-748210">
        <id>P00492</id>
        <label>HPRT1</label>
    </interactant>
    <organismsDiffer>false</organismsDiffer>
    <experiments>3</experiments>
</comment>
<comment type="interaction">
    <interactant intactId="EBI-744239">
        <id>Q14749</id>
    </interactant>
    <interactant intactId="EBI-741158">
        <id>Q96HA8</id>
        <label>NTAQ1</label>
    </interactant>
    <organismsDiffer>false</organismsDiffer>
    <experiments>5</experiments>
</comment>
<comment type="interaction">
    <interactant intactId="EBI-744239">
        <id>Q14749</id>
    </interactant>
    <interactant intactId="EBI-1045395">
        <id>O75643</id>
        <label>SNRNP200</label>
    </interactant>
    <organismsDiffer>false</organismsDiffer>
    <experiments>3</experiments>
</comment>
<comment type="interaction">
    <interactant intactId="EBI-744239">
        <id>Q14749</id>
    </interactant>
    <interactant intactId="EBI-13130472">
        <id>P31213</id>
        <label>SRD5A2</label>
    </interactant>
    <organismsDiffer>false</organismsDiffer>
    <experiments>3</experiments>
</comment>
<comment type="interaction">
    <interactant intactId="EBI-744239">
        <id>Q14749</id>
    </interactant>
    <interactant intactId="EBI-17716262">
        <id>Q9UPQ4-2</id>
        <label>TRIM35</label>
    </interactant>
    <organismsDiffer>false</organismsDiffer>
    <experiments>3</experiments>
</comment>
<comment type="interaction">
    <interactant intactId="EBI-744239">
        <id>Q14749</id>
    </interactant>
    <interactant intactId="EBI-714987">
        <id>Q9Y3M9</id>
        <label>ZNF337</label>
    </interactant>
    <organismsDiffer>false</organismsDiffer>
    <experiments>3</experiments>
</comment>
<comment type="subcellular location">
    <subcellularLocation>
        <location evidence="1">Cytoplasm</location>
    </subcellularLocation>
</comment>
<comment type="tissue specificity">
    <text evidence="10">Expressed only in liver, pancreas, and prostate.</text>
</comment>
<comment type="disease" evidence="4 6">
    <disease id="DI-01680">
        <name>Glycine N-methyltransferase deficiency</name>
        <acronym>GNMT deficiency</acronym>
        <description>The only clinical abnormalities in patients with this deficiency are mild hepatomegaly and chronic elevation of serum transaminases.</description>
        <dbReference type="MIM" id="606664"/>
    </disease>
    <text>The disease is caused by variants affecting the gene represented in this entry.</text>
</comment>
<comment type="similarity">
    <text evidence="3">Belongs to the class I-like SAM-binding methyltransferase superfamily. Glycine N-methyltransferase family.</text>
</comment>
<accession>Q14749</accession>
<accession>Q5T8W2</accession>
<accession>Q9NNZ1</accession>
<accession>Q9NS24</accession>
<name>GNMT_HUMAN</name>
<evidence type="ECO:0000250" key="1">
    <source>
        <dbReference type="UniProtKB" id="P13255"/>
    </source>
</evidence>
<evidence type="ECO:0000250" key="2">
    <source>
        <dbReference type="UniProtKB" id="Q9QXF8"/>
    </source>
</evidence>
<evidence type="ECO:0000255" key="3">
    <source>
        <dbReference type="PROSITE-ProRule" id="PRU00932"/>
    </source>
</evidence>
<evidence type="ECO:0000269" key="4">
    <source>
    </source>
</evidence>
<evidence type="ECO:0000269" key="5">
    <source>
    </source>
</evidence>
<evidence type="ECO:0000269" key="6">
    <source>
    </source>
</evidence>
<evidence type="ECO:0000269" key="7">
    <source>
    </source>
</evidence>
<evidence type="ECO:0000269" key="8">
    <source>
    </source>
</evidence>
<evidence type="ECO:0000269" key="9">
    <source>
    </source>
</evidence>
<evidence type="ECO:0000269" key="10">
    <source>
    </source>
</evidence>
<evidence type="ECO:0000305" key="11"/>
<evidence type="ECO:0000305" key="12">
    <source>
    </source>
</evidence>
<evidence type="ECO:0000312" key="13">
    <source>
        <dbReference type="HGNC" id="HGNC:4415"/>
    </source>
</evidence>
<evidence type="ECO:0007829" key="14">
    <source>
        <dbReference type="PDB" id="1R74"/>
    </source>
</evidence>
<gene>
    <name evidence="13" type="primary">GNMT</name>
</gene>
<keyword id="KW-0002">3D-structure</keyword>
<keyword id="KW-0007">Acetylation</keyword>
<keyword id="KW-0963">Cytoplasm</keyword>
<keyword id="KW-0225">Disease variant</keyword>
<keyword id="KW-0290">Folate-binding</keyword>
<keyword id="KW-0489">Methyltransferase</keyword>
<keyword id="KW-0597">Phosphoprotein</keyword>
<keyword id="KW-1267">Proteomics identification</keyword>
<keyword id="KW-1185">Reference proteome</keyword>
<keyword id="KW-0949">S-adenosyl-L-methionine</keyword>
<keyword id="KW-0808">Transferase</keyword>